<dbReference type="EMBL" id="BX571856">
    <property type="protein sequence ID" value="CAG39429.1"/>
    <property type="molecule type" value="Genomic_DNA"/>
</dbReference>
<dbReference type="RefSeq" id="WP_001791353.1">
    <property type="nucleotide sequence ID" value="NC_002952.2"/>
</dbReference>
<dbReference type="KEGG" id="sar:SAR0405"/>
<dbReference type="HOGENOM" id="CLU_152601_0_0_9"/>
<dbReference type="Proteomes" id="UP000000596">
    <property type="component" value="Chromosome"/>
</dbReference>
<dbReference type="InterPro" id="IPR025889">
    <property type="entry name" value="GSP17M-like_dom"/>
</dbReference>
<dbReference type="Pfam" id="PF11181">
    <property type="entry name" value="YflT"/>
    <property type="match status" value="1"/>
</dbReference>
<proteinExistence type="inferred from homology"/>
<feature type="chain" id="PRO_0000220345" description="UPF0355 protein MRSA252">
    <location>
        <begin position="1"/>
        <end position="135"/>
    </location>
</feature>
<accession>Q6GJR0</accession>
<sequence length="135" mass="15051">MADITVVNDTGELYNVINQKKSEGYLESELTIISKSKLHLNDLHDSEISLISTSGTFSDKMTKLLTGEDGEHAVLSRYNLAPDELEKYKQLILDDKMLVVGVRDHSSHQEVLENNSAYEEVDITHFAEASKGPKA</sequence>
<gene>
    <name type="ordered locus">SAR0405</name>
</gene>
<name>UP355_STAAR</name>
<reference key="1">
    <citation type="journal article" date="2004" name="Proc. Natl. Acad. Sci. U.S.A.">
        <title>Complete genomes of two clinical Staphylococcus aureus strains: evidence for the rapid evolution of virulence and drug resistance.</title>
        <authorList>
            <person name="Holden M.T.G."/>
            <person name="Feil E.J."/>
            <person name="Lindsay J.A."/>
            <person name="Peacock S.J."/>
            <person name="Day N.P.J."/>
            <person name="Enright M.C."/>
            <person name="Foster T.J."/>
            <person name="Moore C.E."/>
            <person name="Hurst L."/>
            <person name="Atkin R."/>
            <person name="Barron A."/>
            <person name="Bason N."/>
            <person name="Bentley S.D."/>
            <person name="Chillingworth C."/>
            <person name="Chillingworth T."/>
            <person name="Churcher C."/>
            <person name="Clark L."/>
            <person name="Corton C."/>
            <person name="Cronin A."/>
            <person name="Doggett J."/>
            <person name="Dowd L."/>
            <person name="Feltwell T."/>
            <person name="Hance Z."/>
            <person name="Harris B."/>
            <person name="Hauser H."/>
            <person name="Holroyd S."/>
            <person name="Jagels K."/>
            <person name="James K.D."/>
            <person name="Lennard N."/>
            <person name="Line A."/>
            <person name="Mayes R."/>
            <person name="Moule S."/>
            <person name="Mungall K."/>
            <person name="Ormond D."/>
            <person name="Quail M.A."/>
            <person name="Rabbinowitsch E."/>
            <person name="Rutherford K.M."/>
            <person name="Sanders M."/>
            <person name="Sharp S."/>
            <person name="Simmonds M."/>
            <person name="Stevens K."/>
            <person name="Whitehead S."/>
            <person name="Barrell B.G."/>
            <person name="Spratt B.G."/>
            <person name="Parkhill J."/>
        </authorList>
    </citation>
    <scope>NUCLEOTIDE SEQUENCE [LARGE SCALE GENOMIC DNA]</scope>
    <source>
        <strain>MRSA252</strain>
    </source>
</reference>
<evidence type="ECO:0000305" key="1"/>
<comment type="similarity">
    <text evidence="1">Belongs to the UPF0355 family.</text>
</comment>
<organism>
    <name type="scientific">Staphylococcus aureus (strain MRSA252)</name>
    <dbReference type="NCBI Taxonomy" id="282458"/>
    <lineage>
        <taxon>Bacteria</taxon>
        <taxon>Bacillati</taxon>
        <taxon>Bacillota</taxon>
        <taxon>Bacilli</taxon>
        <taxon>Bacillales</taxon>
        <taxon>Staphylococcaceae</taxon>
        <taxon>Staphylococcus</taxon>
    </lineage>
</organism>
<protein>
    <recommendedName>
        <fullName>UPF0355 protein MRSA252</fullName>
    </recommendedName>
</protein>